<comment type="function">
    <text evidence="1">DNA ligase that seals nicks in double-stranded DNA during DNA replication, DNA recombination and DNA repair.</text>
</comment>
<comment type="catalytic activity">
    <reaction evidence="1">
        <text>ATP + (deoxyribonucleotide)n-3'-hydroxyl + 5'-phospho-(deoxyribonucleotide)m = (deoxyribonucleotide)n+m + AMP + diphosphate.</text>
        <dbReference type="EC" id="6.5.1.1"/>
    </reaction>
</comment>
<comment type="cofactor">
    <cofactor evidence="1">
        <name>Mg(2+)</name>
        <dbReference type="ChEBI" id="CHEBI:18420"/>
    </cofactor>
</comment>
<comment type="similarity">
    <text evidence="1">Belongs to the ATP-dependent DNA ligase family.</text>
</comment>
<protein>
    <recommendedName>
        <fullName evidence="1">Probable DNA ligase</fullName>
        <ecNumber evidence="1">6.5.1.1</ecNumber>
    </recommendedName>
    <alternativeName>
        <fullName evidence="1">Polydeoxyribonucleotide synthase [ATP]</fullName>
    </alternativeName>
</protein>
<feature type="chain" id="PRO_0000365239" description="Probable DNA ligase">
    <location>
        <begin position="1"/>
        <end position="533"/>
    </location>
</feature>
<feature type="region of interest" description="Disordered" evidence="2">
    <location>
        <begin position="512"/>
        <end position="533"/>
    </location>
</feature>
<feature type="active site" description="N6-AMP-lysine intermediate" evidence="1">
    <location>
        <position position="213"/>
    </location>
</feature>
<feature type="binding site" evidence="1">
    <location>
        <position position="211"/>
    </location>
    <ligand>
        <name>ATP</name>
        <dbReference type="ChEBI" id="CHEBI:30616"/>
    </ligand>
</feature>
<feature type="binding site" evidence="1">
    <location>
        <position position="218"/>
    </location>
    <ligand>
        <name>ATP</name>
        <dbReference type="ChEBI" id="CHEBI:30616"/>
    </ligand>
</feature>
<feature type="binding site" evidence="1">
    <location>
        <position position="233"/>
    </location>
    <ligand>
        <name>ATP</name>
        <dbReference type="ChEBI" id="CHEBI:30616"/>
    </ligand>
</feature>
<feature type="binding site" evidence="1">
    <location>
        <position position="262"/>
    </location>
    <ligand>
        <name>ATP</name>
        <dbReference type="ChEBI" id="CHEBI:30616"/>
    </ligand>
</feature>
<feature type="binding site" evidence="1">
    <location>
        <position position="302"/>
    </location>
    <ligand>
        <name>ATP</name>
        <dbReference type="ChEBI" id="CHEBI:30616"/>
    </ligand>
</feature>
<feature type="binding site" evidence="1">
    <location>
        <position position="374"/>
    </location>
    <ligand>
        <name>ATP</name>
        <dbReference type="ChEBI" id="CHEBI:30616"/>
    </ligand>
</feature>
<feature type="binding site" evidence="1">
    <location>
        <position position="380"/>
    </location>
    <ligand>
        <name>ATP</name>
        <dbReference type="ChEBI" id="CHEBI:30616"/>
    </ligand>
</feature>
<evidence type="ECO:0000255" key="1">
    <source>
        <dbReference type="HAMAP-Rule" id="MF_00407"/>
    </source>
</evidence>
<evidence type="ECO:0000256" key="2">
    <source>
        <dbReference type="SAM" id="MobiDB-lite"/>
    </source>
</evidence>
<accession>A9GU24</accession>
<sequence>MLVSDLVATSERVAALSRRVEKIGALAALLRRFSPAEVQIGVDWLTGRLRQGRLGLGPSVFAEARRASPSVAQPALTLGDADAVFTEIARASGPGAGGERRAALAGLFARATDLERDFFARLLAGELRQERLEPVMVDAVARAARVPPASLRRAVMLAGDAAEVVKAALLEGALGLQRFSLQLLRPVQPMLAQSADDVVTALSELRAMALEWKLDGVRVQAHKAGDEVRVFSRGLGPVTKAVPEIVEIVRALPVRSVVLDGEALAFRPDGAPHPFQVTMRRFGRAHDAAALRAELPLRALFFDVLHLDGEDLLDRPGSERTAALRQVLDRSLRVPRIELPTAAEAEAFFADALAHGHEGVIAKSLAAPYEAGRRRGTWLKVKRARTLDLVVLAAEWGTGRRRGLLSNLHIGARDPAAGGFVLLGKTFKGMNDEVLAWQTQRLLELEIGRDADTVYVRPEIVVEVAFDGLQSSPRYPGGVALRSARVKRYRPDKPAGEISTMDEVRAIHAGALAGEAAEKGQAEGGGEELEDDG</sequence>
<proteinExistence type="inferred from homology"/>
<gene>
    <name evidence="1" type="primary">lig</name>
    <name type="ordered locus">sce6857</name>
</gene>
<dbReference type="EC" id="6.5.1.1" evidence="1"/>
<dbReference type="EMBL" id="AM746676">
    <property type="protein sequence ID" value="CAN97026.1"/>
    <property type="molecule type" value="Genomic_DNA"/>
</dbReference>
<dbReference type="RefSeq" id="WP_012239465.1">
    <property type="nucleotide sequence ID" value="NC_010162.1"/>
</dbReference>
<dbReference type="SMR" id="A9GU24"/>
<dbReference type="STRING" id="448385.sce6857"/>
<dbReference type="KEGG" id="scl:sce6857"/>
<dbReference type="eggNOG" id="COG1793">
    <property type="taxonomic scope" value="Bacteria"/>
</dbReference>
<dbReference type="HOGENOM" id="CLU_005138_6_1_7"/>
<dbReference type="OrthoDB" id="9767858at2"/>
<dbReference type="BioCyc" id="SCEL448385:SCE_RS35165-MONOMER"/>
<dbReference type="Proteomes" id="UP000002139">
    <property type="component" value="Chromosome"/>
</dbReference>
<dbReference type="GO" id="GO:0005524">
    <property type="term" value="F:ATP binding"/>
    <property type="evidence" value="ECO:0007669"/>
    <property type="project" value="UniProtKB-UniRule"/>
</dbReference>
<dbReference type="GO" id="GO:0003677">
    <property type="term" value="F:DNA binding"/>
    <property type="evidence" value="ECO:0007669"/>
    <property type="project" value="InterPro"/>
</dbReference>
<dbReference type="GO" id="GO:0003910">
    <property type="term" value="F:DNA ligase (ATP) activity"/>
    <property type="evidence" value="ECO:0007669"/>
    <property type="project" value="UniProtKB-UniRule"/>
</dbReference>
<dbReference type="GO" id="GO:0046872">
    <property type="term" value="F:metal ion binding"/>
    <property type="evidence" value="ECO:0007669"/>
    <property type="project" value="UniProtKB-KW"/>
</dbReference>
<dbReference type="GO" id="GO:0051301">
    <property type="term" value="P:cell division"/>
    <property type="evidence" value="ECO:0007669"/>
    <property type="project" value="UniProtKB-KW"/>
</dbReference>
<dbReference type="GO" id="GO:0071897">
    <property type="term" value="P:DNA biosynthetic process"/>
    <property type="evidence" value="ECO:0007669"/>
    <property type="project" value="InterPro"/>
</dbReference>
<dbReference type="GO" id="GO:0006310">
    <property type="term" value="P:DNA recombination"/>
    <property type="evidence" value="ECO:0007669"/>
    <property type="project" value="UniProtKB-UniRule"/>
</dbReference>
<dbReference type="GO" id="GO:0006281">
    <property type="term" value="P:DNA repair"/>
    <property type="evidence" value="ECO:0007669"/>
    <property type="project" value="UniProtKB-UniRule"/>
</dbReference>
<dbReference type="GO" id="GO:0006260">
    <property type="term" value="P:DNA replication"/>
    <property type="evidence" value="ECO:0007669"/>
    <property type="project" value="UniProtKB-UniRule"/>
</dbReference>
<dbReference type="CDD" id="cd07901">
    <property type="entry name" value="Adenylation_DNA_ligase_Arch_LigB"/>
    <property type="match status" value="1"/>
</dbReference>
<dbReference type="Gene3D" id="1.10.3260.10">
    <property type="entry name" value="DNA ligase, ATP-dependent, N-terminal domain"/>
    <property type="match status" value="1"/>
</dbReference>
<dbReference type="Gene3D" id="3.30.470.30">
    <property type="entry name" value="DNA ligase/mRNA capping enzyme"/>
    <property type="match status" value="1"/>
</dbReference>
<dbReference type="Gene3D" id="2.40.50.140">
    <property type="entry name" value="Nucleic acid-binding proteins"/>
    <property type="match status" value="1"/>
</dbReference>
<dbReference type="HAMAP" id="MF_00407">
    <property type="entry name" value="DNA_ligase"/>
    <property type="match status" value="1"/>
</dbReference>
<dbReference type="InterPro" id="IPR050191">
    <property type="entry name" value="ATP-dep_DNA_ligase"/>
</dbReference>
<dbReference type="InterPro" id="IPR022865">
    <property type="entry name" value="DNA_ligae_ATP-dep_bac/arc"/>
</dbReference>
<dbReference type="InterPro" id="IPR000977">
    <property type="entry name" value="DNA_ligase_ATP-dep"/>
</dbReference>
<dbReference type="InterPro" id="IPR012309">
    <property type="entry name" value="DNA_ligase_ATP-dep_C"/>
</dbReference>
<dbReference type="InterPro" id="IPR012310">
    <property type="entry name" value="DNA_ligase_ATP-dep_cent"/>
</dbReference>
<dbReference type="InterPro" id="IPR016059">
    <property type="entry name" value="DNA_ligase_ATP-dep_CS"/>
</dbReference>
<dbReference type="InterPro" id="IPR012308">
    <property type="entry name" value="DNA_ligase_ATP-dep_N"/>
</dbReference>
<dbReference type="InterPro" id="IPR036599">
    <property type="entry name" value="DNA_ligase_N_sf"/>
</dbReference>
<dbReference type="InterPro" id="IPR012340">
    <property type="entry name" value="NA-bd_OB-fold"/>
</dbReference>
<dbReference type="NCBIfam" id="TIGR00574">
    <property type="entry name" value="dnl1"/>
    <property type="match status" value="1"/>
</dbReference>
<dbReference type="NCBIfam" id="NF002868">
    <property type="entry name" value="PRK03180.1"/>
    <property type="match status" value="1"/>
</dbReference>
<dbReference type="PANTHER" id="PTHR45674">
    <property type="entry name" value="DNA LIGASE 1/3 FAMILY MEMBER"/>
    <property type="match status" value="1"/>
</dbReference>
<dbReference type="PANTHER" id="PTHR45674:SF13">
    <property type="entry name" value="DNA LIGASE-RELATED"/>
    <property type="match status" value="1"/>
</dbReference>
<dbReference type="Pfam" id="PF04679">
    <property type="entry name" value="DNA_ligase_A_C"/>
    <property type="match status" value="1"/>
</dbReference>
<dbReference type="Pfam" id="PF01068">
    <property type="entry name" value="DNA_ligase_A_M"/>
    <property type="match status" value="1"/>
</dbReference>
<dbReference type="Pfam" id="PF04675">
    <property type="entry name" value="DNA_ligase_A_N"/>
    <property type="match status" value="1"/>
</dbReference>
<dbReference type="SUPFAM" id="SSF117018">
    <property type="entry name" value="ATP-dependent DNA ligase DNA-binding domain"/>
    <property type="match status" value="1"/>
</dbReference>
<dbReference type="SUPFAM" id="SSF56091">
    <property type="entry name" value="DNA ligase/mRNA capping enzyme, catalytic domain"/>
    <property type="match status" value="1"/>
</dbReference>
<dbReference type="SUPFAM" id="SSF50249">
    <property type="entry name" value="Nucleic acid-binding proteins"/>
    <property type="match status" value="1"/>
</dbReference>
<dbReference type="PROSITE" id="PS00697">
    <property type="entry name" value="DNA_LIGASE_A1"/>
    <property type="match status" value="1"/>
</dbReference>
<dbReference type="PROSITE" id="PS00333">
    <property type="entry name" value="DNA_LIGASE_A2"/>
    <property type="match status" value="1"/>
</dbReference>
<dbReference type="PROSITE" id="PS50160">
    <property type="entry name" value="DNA_LIGASE_A3"/>
    <property type="match status" value="1"/>
</dbReference>
<reference key="1">
    <citation type="journal article" date="2007" name="Nat. Biotechnol.">
        <title>Complete genome sequence of the myxobacterium Sorangium cellulosum.</title>
        <authorList>
            <person name="Schneiker S."/>
            <person name="Perlova O."/>
            <person name="Kaiser O."/>
            <person name="Gerth K."/>
            <person name="Alici A."/>
            <person name="Altmeyer M.O."/>
            <person name="Bartels D."/>
            <person name="Bekel T."/>
            <person name="Beyer S."/>
            <person name="Bode E."/>
            <person name="Bode H.B."/>
            <person name="Bolten C.J."/>
            <person name="Choudhuri J.V."/>
            <person name="Doss S."/>
            <person name="Elnakady Y.A."/>
            <person name="Frank B."/>
            <person name="Gaigalat L."/>
            <person name="Goesmann A."/>
            <person name="Groeger C."/>
            <person name="Gross F."/>
            <person name="Jelsbak L."/>
            <person name="Jelsbak L."/>
            <person name="Kalinowski J."/>
            <person name="Kegler C."/>
            <person name="Knauber T."/>
            <person name="Konietzny S."/>
            <person name="Kopp M."/>
            <person name="Krause L."/>
            <person name="Krug D."/>
            <person name="Linke B."/>
            <person name="Mahmud T."/>
            <person name="Martinez-Arias R."/>
            <person name="McHardy A.C."/>
            <person name="Merai M."/>
            <person name="Meyer F."/>
            <person name="Mormann S."/>
            <person name="Munoz-Dorado J."/>
            <person name="Perez J."/>
            <person name="Pradella S."/>
            <person name="Rachid S."/>
            <person name="Raddatz G."/>
            <person name="Rosenau F."/>
            <person name="Rueckert C."/>
            <person name="Sasse F."/>
            <person name="Scharfe M."/>
            <person name="Schuster S.C."/>
            <person name="Suen G."/>
            <person name="Treuner-Lange A."/>
            <person name="Velicer G.J."/>
            <person name="Vorholter F.-J."/>
            <person name="Weissman K.J."/>
            <person name="Welch R.D."/>
            <person name="Wenzel S.C."/>
            <person name="Whitworth D.E."/>
            <person name="Wilhelm S."/>
            <person name="Wittmann C."/>
            <person name="Bloecker H."/>
            <person name="Puehler A."/>
            <person name="Mueller R."/>
        </authorList>
    </citation>
    <scope>NUCLEOTIDE SEQUENCE [LARGE SCALE GENOMIC DNA]</scope>
    <source>
        <strain>So ce56</strain>
    </source>
</reference>
<name>DNLI_SORC5</name>
<keyword id="KW-0067">ATP-binding</keyword>
<keyword id="KW-0131">Cell cycle</keyword>
<keyword id="KW-0132">Cell division</keyword>
<keyword id="KW-0227">DNA damage</keyword>
<keyword id="KW-0233">DNA recombination</keyword>
<keyword id="KW-0234">DNA repair</keyword>
<keyword id="KW-0235">DNA replication</keyword>
<keyword id="KW-0436">Ligase</keyword>
<keyword id="KW-0460">Magnesium</keyword>
<keyword id="KW-0479">Metal-binding</keyword>
<keyword id="KW-0547">Nucleotide-binding</keyword>
<keyword id="KW-1185">Reference proteome</keyword>
<organism>
    <name type="scientific">Sorangium cellulosum (strain So ce56)</name>
    <name type="common">Polyangium cellulosum (strain So ce56)</name>
    <dbReference type="NCBI Taxonomy" id="448385"/>
    <lineage>
        <taxon>Bacteria</taxon>
        <taxon>Pseudomonadati</taxon>
        <taxon>Myxococcota</taxon>
        <taxon>Polyangia</taxon>
        <taxon>Polyangiales</taxon>
        <taxon>Polyangiaceae</taxon>
        <taxon>Sorangium</taxon>
    </lineage>
</organism>